<feature type="chain" id="PRO_0000327765" description="COP9 signalosome complex subunit 4">
    <location>
        <begin position="1"/>
        <end position="393"/>
    </location>
</feature>
<feature type="domain" description="PCI" evidence="2">
    <location>
        <begin position="197"/>
        <end position="362"/>
    </location>
</feature>
<evidence type="ECO:0000250" key="1"/>
<evidence type="ECO:0000255" key="2">
    <source>
        <dbReference type="PROSITE-ProRule" id="PRU01185"/>
    </source>
</evidence>
<evidence type="ECO:0000305" key="3"/>
<gene>
    <name type="primary">csn4</name>
    <name type="ORF">DDB_G0293844</name>
</gene>
<reference key="1">
    <citation type="journal article" date="2006" name="Eur. J. Cell Biol.">
        <title>The COP9 signalosome regulates cell proliferation of Dictyostelium discoideum.</title>
        <authorList>
            <person name="Rosel D."/>
            <person name="Kimmel A.R."/>
        </authorList>
    </citation>
    <scope>NUCLEOTIDE SEQUENCE [MRNA]</scope>
    <source>
        <strain>AX3</strain>
    </source>
</reference>
<reference key="2">
    <citation type="journal article" date="2005" name="Nature">
        <title>The genome of the social amoeba Dictyostelium discoideum.</title>
        <authorList>
            <person name="Eichinger L."/>
            <person name="Pachebat J.A."/>
            <person name="Gloeckner G."/>
            <person name="Rajandream M.A."/>
            <person name="Sucgang R."/>
            <person name="Berriman M."/>
            <person name="Song J."/>
            <person name="Olsen R."/>
            <person name="Szafranski K."/>
            <person name="Xu Q."/>
            <person name="Tunggal B."/>
            <person name="Kummerfeld S."/>
            <person name="Madera M."/>
            <person name="Konfortov B.A."/>
            <person name="Rivero F."/>
            <person name="Bankier A.T."/>
            <person name="Lehmann R."/>
            <person name="Hamlin N."/>
            <person name="Davies R."/>
            <person name="Gaudet P."/>
            <person name="Fey P."/>
            <person name="Pilcher K."/>
            <person name="Chen G."/>
            <person name="Saunders D."/>
            <person name="Sodergren E.J."/>
            <person name="Davis P."/>
            <person name="Kerhornou A."/>
            <person name="Nie X."/>
            <person name="Hall N."/>
            <person name="Anjard C."/>
            <person name="Hemphill L."/>
            <person name="Bason N."/>
            <person name="Farbrother P."/>
            <person name="Desany B."/>
            <person name="Just E."/>
            <person name="Morio T."/>
            <person name="Rost R."/>
            <person name="Churcher C.M."/>
            <person name="Cooper J."/>
            <person name="Haydock S."/>
            <person name="van Driessche N."/>
            <person name="Cronin A."/>
            <person name="Goodhead I."/>
            <person name="Muzny D.M."/>
            <person name="Mourier T."/>
            <person name="Pain A."/>
            <person name="Lu M."/>
            <person name="Harper D."/>
            <person name="Lindsay R."/>
            <person name="Hauser H."/>
            <person name="James K.D."/>
            <person name="Quiles M."/>
            <person name="Madan Babu M."/>
            <person name="Saito T."/>
            <person name="Buchrieser C."/>
            <person name="Wardroper A."/>
            <person name="Felder M."/>
            <person name="Thangavelu M."/>
            <person name="Johnson D."/>
            <person name="Knights A."/>
            <person name="Loulseged H."/>
            <person name="Mungall K.L."/>
            <person name="Oliver K."/>
            <person name="Price C."/>
            <person name="Quail M.A."/>
            <person name="Urushihara H."/>
            <person name="Hernandez J."/>
            <person name="Rabbinowitsch E."/>
            <person name="Steffen D."/>
            <person name="Sanders M."/>
            <person name="Ma J."/>
            <person name="Kohara Y."/>
            <person name="Sharp S."/>
            <person name="Simmonds M.N."/>
            <person name="Spiegler S."/>
            <person name="Tivey A."/>
            <person name="Sugano S."/>
            <person name="White B."/>
            <person name="Walker D."/>
            <person name="Woodward J.R."/>
            <person name="Winckler T."/>
            <person name="Tanaka Y."/>
            <person name="Shaulsky G."/>
            <person name="Schleicher M."/>
            <person name="Weinstock G.M."/>
            <person name="Rosenthal A."/>
            <person name="Cox E.C."/>
            <person name="Chisholm R.L."/>
            <person name="Gibbs R.A."/>
            <person name="Loomis W.F."/>
            <person name="Platzer M."/>
            <person name="Kay R.R."/>
            <person name="Williams J.G."/>
            <person name="Dear P.H."/>
            <person name="Noegel A.A."/>
            <person name="Barrell B.G."/>
            <person name="Kuspa A."/>
        </authorList>
    </citation>
    <scope>NUCLEOTIDE SEQUENCE [LARGE SCALE GENOMIC DNA]</scope>
    <source>
        <strain>AX4</strain>
    </source>
</reference>
<name>CSN4_DICDI</name>
<proteinExistence type="evidence at transcript level"/>
<organism>
    <name type="scientific">Dictyostelium discoideum</name>
    <name type="common">Social amoeba</name>
    <dbReference type="NCBI Taxonomy" id="44689"/>
    <lineage>
        <taxon>Eukaryota</taxon>
        <taxon>Amoebozoa</taxon>
        <taxon>Evosea</taxon>
        <taxon>Eumycetozoa</taxon>
        <taxon>Dictyostelia</taxon>
        <taxon>Dictyosteliales</taxon>
        <taxon>Dictyosteliaceae</taxon>
        <taxon>Dictyostelium</taxon>
    </lineage>
</organism>
<protein>
    <recommendedName>
        <fullName>COP9 signalosome complex subunit 4</fullName>
        <shortName>Signalosome subunit 4</shortName>
    </recommendedName>
</protein>
<sequence>MDVNNLKQILEETSALSDHKTKTEKYKSILQQLVESKQVAPLKVFITHLTDESTPLVISRTILLSFTSSHKTLPEDIQMELGIFVLDRIQNRVVAFEEQVSEIRYNLAKLYERQENWRESARCLIAIPLDSSQRVISPEYKVKIYVKIARLFLEEEESGQAETYINRASDSLHLVKNQKLILAHKTCFARIMDYKRMFLKASLRYYDLSQCLPKDTERMHALSCAIVCAILDKAGPQRSRTLATLYKDERSQQLGVYTFLEKMFLERILKKTEVKKFAEQLKPHQMALLSDGNTVLDRAVIEHNLLSASKLYNNITFDELGSLLEIQAEKAEKVASKMVCEERLIGSIDQIERLIQFENVGDSLTQWDKKIEGLCIHMNNIIESISKYPEFIV</sequence>
<keyword id="KW-0963">Cytoplasm</keyword>
<keyword id="KW-0539">Nucleus</keyword>
<keyword id="KW-1185">Reference proteome</keyword>
<keyword id="KW-0736">Signalosome</keyword>
<dbReference type="EMBL" id="DQ309432">
    <property type="protein sequence ID" value="ABC46696.1"/>
    <property type="molecule type" value="mRNA"/>
</dbReference>
<dbReference type="EMBL" id="AAFI02000222">
    <property type="protein sequence ID" value="EAL60525.1"/>
    <property type="molecule type" value="Genomic_DNA"/>
</dbReference>
<dbReference type="RefSeq" id="XP_628938.1">
    <property type="nucleotide sequence ID" value="XM_628936.1"/>
</dbReference>
<dbReference type="SMR" id="Q54B82"/>
<dbReference type="FunCoup" id="Q54B82">
    <property type="interactions" value="1186"/>
</dbReference>
<dbReference type="STRING" id="44689.Q54B82"/>
<dbReference type="PaxDb" id="44689-DDB0233102"/>
<dbReference type="EnsemblProtists" id="EAL60525">
    <property type="protein sequence ID" value="EAL60525"/>
    <property type="gene ID" value="DDB_G0293844"/>
</dbReference>
<dbReference type="GeneID" id="8629446"/>
<dbReference type="KEGG" id="ddi:DDB_G0293844"/>
<dbReference type="dictyBase" id="DDB_G0293844">
    <property type="gene designation" value="csn4"/>
</dbReference>
<dbReference type="VEuPathDB" id="AmoebaDB:DDB_G0293844"/>
<dbReference type="eggNOG" id="KOG1497">
    <property type="taxonomic scope" value="Eukaryota"/>
</dbReference>
<dbReference type="HOGENOM" id="CLU_028132_1_0_1"/>
<dbReference type="InParanoid" id="Q54B82"/>
<dbReference type="OMA" id="KNIMHTV"/>
<dbReference type="PhylomeDB" id="Q54B82"/>
<dbReference type="Reactome" id="R-DDI-5696394">
    <property type="pathway name" value="DNA Damage Recognition in GG-NER"/>
</dbReference>
<dbReference type="Reactome" id="R-DDI-6781823">
    <property type="pathway name" value="Formation of TC-NER Pre-Incision Complex"/>
</dbReference>
<dbReference type="Reactome" id="R-DDI-8856825">
    <property type="pathway name" value="Cargo recognition for clathrin-mediated endocytosis"/>
</dbReference>
<dbReference type="Reactome" id="R-DDI-8951664">
    <property type="pathway name" value="Neddylation"/>
</dbReference>
<dbReference type="Reactome" id="R-DDI-9013422">
    <property type="pathway name" value="RHOBTB1 GTPase cycle"/>
</dbReference>
<dbReference type="PRO" id="PR:Q54B82"/>
<dbReference type="Proteomes" id="UP000002195">
    <property type="component" value="Chromosome 6"/>
</dbReference>
<dbReference type="GO" id="GO:0008180">
    <property type="term" value="C:COP9 signalosome"/>
    <property type="evidence" value="ECO:0000353"/>
    <property type="project" value="dictyBase"/>
</dbReference>
<dbReference type="GO" id="GO:0005737">
    <property type="term" value="C:cytoplasm"/>
    <property type="evidence" value="ECO:0007669"/>
    <property type="project" value="UniProtKB-SubCell"/>
</dbReference>
<dbReference type="FunFam" id="1.10.10.10:FF:000190">
    <property type="entry name" value="COP9 signalosome complex subunit 4"/>
    <property type="match status" value="1"/>
</dbReference>
<dbReference type="Gene3D" id="1.10.10.10">
    <property type="entry name" value="Winged helix-like DNA-binding domain superfamily/Winged helix DNA-binding domain"/>
    <property type="match status" value="1"/>
</dbReference>
<dbReference type="InterPro" id="IPR000717">
    <property type="entry name" value="PCI_dom"/>
</dbReference>
<dbReference type="InterPro" id="IPR054559">
    <property type="entry name" value="PSMD12-CSN4-like_N"/>
</dbReference>
<dbReference type="InterPro" id="IPR040134">
    <property type="entry name" value="PSMD12/CSN4"/>
</dbReference>
<dbReference type="InterPro" id="IPR036388">
    <property type="entry name" value="WH-like_DNA-bd_sf"/>
</dbReference>
<dbReference type="InterPro" id="IPR036390">
    <property type="entry name" value="WH_DNA-bd_sf"/>
</dbReference>
<dbReference type="PANTHER" id="PTHR10855">
    <property type="entry name" value="26S PROTEASOME NON-ATPASE REGULATORY SUBUNIT 12/COP9 SIGNALOSOME COMPLEX SUBUNIT 4"/>
    <property type="match status" value="1"/>
</dbReference>
<dbReference type="PANTHER" id="PTHR10855:SF2">
    <property type="entry name" value="COP9 SIGNALOSOME COMPLEX SUBUNIT 4"/>
    <property type="match status" value="1"/>
</dbReference>
<dbReference type="Pfam" id="PF01399">
    <property type="entry name" value="PCI"/>
    <property type="match status" value="1"/>
</dbReference>
<dbReference type="Pfam" id="PF22241">
    <property type="entry name" value="PSMD12-CSN4_N"/>
    <property type="match status" value="1"/>
</dbReference>
<dbReference type="SMART" id="SM00088">
    <property type="entry name" value="PINT"/>
    <property type="match status" value="1"/>
</dbReference>
<dbReference type="SUPFAM" id="SSF46785">
    <property type="entry name" value="Winged helix' DNA-binding domain"/>
    <property type="match status" value="1"/>
</dbReference>
<dbReference type="PROSITE" id="PS50250">
    <property type="entry name" value="PCI"/>
    <property type="match status" value="1"/>
</dbReference>
<comment type="function">
    <text>Component of the COP9 signalosome complex (CSN), a complex involved in various cellular and developmental processes. The CSN complex is an essential regulator of the ubiquitin (Ubl) conjugation pathway by mediating the deneddylation of the cullin subunits of E3 ligase complexes, leading to modify the Ubl ligase activity.</text>
</comment>
<comment type="subunit">
    <text>Component of the CSN complex. The holocomplex is comprised of 8 subunits csn1-8. In the complex, it probably interacts directly with csn1, csn2, csn3, csn4, csn6 and csn8.</text>
</comment>
<comment type="subcellular location">
    <subcellularLocation>
        <location evidence="1">Cytoplasm</location>
    </subcellularLocation>
    <subcellularLocation>
        <location evidence="1">Nucleus</location>
    </subcellularLocation>
</comment>
<comment type="similarity">
    <text evidence="3">Belongs to the CSN4 family.</text>
</comment>
<accession>Q54B82</accession>
<accession>Q2PQ75</accession>